<evidence type="ECO:0000255" key="1">
    <source>
        <dbReference type="HAMAP-Rule" id="MF_00038"/>
    </source>
</evidence>
<gene>
    <name evidence="1" type="primary">mraY</name>
    <name type="ordered locus">Pden_0588</name>
</gene>
<keyword id="KW-0131">Cell cycle</keyword>
<keyword id="KW-0132">Cell division</keyword>
<keyword id="KW-0997">Cell inner membrane</keyword>
<keyword id="KW-1003">Cell membrane</keyword>
<keyword id="KW-0133">Cell shape</keyword>
<keyword id="KW-0961">Cell wall biogenesis/degradation</keyword>
<keyword id="KW-0460">Magnesium</keyword>
<keyword id="KW-0472">Membrane</keyword>
<keyword id="KW-0479">Metal-binding</keyword>
<keyword id="KW-0573">Peptidoglycan synthesis</keyword>
<keyword id="KW-1185">Reference proteome</keyword>
<keyword id="KW-0808">Transferase</keyword>
<keyword id="KW-0812">Transmembrane</keyword>
<keyword id="KW-1133">Transmembrane helix</keyword>
<feature type="chain" id="PRO_1000003026" description="Phospho-N-acetylmuramoyl-pentapeptide-transferase">
    <location>
        <begin position="1"/>
        <end position="360"/>
    </location>
</feature>
<feature type="transmembrane region" description="Helical" evidence="1">
    <location>
        <begin position="20"/>
        <end position="40"/>
    </location>
</feature>
<feature type="transmembrane region" description="Helical" evidence="1">
    <location>
        <begin position="71"/>
        <end position="91"/>
    </location>
</feature>
<feature type="transmembrane region" description="Helical" evidence="1">
    <location>
        <begin position="93"/>
        <end position="113"/>
    </location>
</feature>
<feature type="transmembrane region" description="Helical" evidence="1">
    <location>
        <begin position="134"/>
        <end position="154"/>
    </location>
</feature>
<feature type="transmembrane region" description="Helical" evidence="1">
    <location>
        <begin position="168"/>
        <end position="188"/>
    </location>
</feature>
<feature type="transmembrane region" description="Helical" evidence="1">
    <location>
        <begin position="199"/>
        <end position="219"/>
    </location>
</feature>
<feature type="transmembrane region" description="Helical" evidence="1">
    <location>
        <begin position="239"/>
        <end position="259"/>
    </location>
</feature>
<feature type="transmembrane region" description="Helical" evidence="1">
    <location>
        <begin position="263"/>
        <end position="283"/>
    </location>
</feature>
<feature type="transmembrane region" description="Helical" evidence="1">
    <location>
        <begin position="288"/>
        <end position="308"/>
    </location>
</feature>
<feature type="transmembrane region" description="Helical" evidence="1">
    <location>
        <begin position="337"/>
        <end position="357"/>
    </location>
</feature>
<comment type="function">
    <text evidence="1">Catalyzes the initial step of the lipid cycle reactions in the biosynthesis of the cell wall peptidoglycan: transfers peptidoglycan precursor phospho-MurNAc-pentapeptide from UDP-MurNAc-pentapeptide onto the lipid carrier undecaprenyl phosphate, yielding undecaprenyl-pyrophosphoryl-MurNAc-pentapeptide, known as lipid I.</text>
</comment>
<comment type="catalytic activity">
    <reaction evidence="1">
        <text>UDP-N-acetyl-alpha-D-muramoyl-L-alanyl-gamma-D-glutamyl-meso-2,6-diaminopimeloyl-D-alanyl-D-alanine + di-trans,octa-cis-undecaprenyl phosphate = di-trans,octa-cis-undecaprenyl diphospho-N-acetyl-alpha-D-muramoyl-L-alanyl-D-glutamyl-meso-2,6-diaminopimeloyl-D-alanyl-D-alanine + UMP</text>
        <dbReference type="Rhea" id="RHEA:28386"/>
        <dbReference type="ChEBI" id="CHEBI:57865"/>
        <dbReference type="ChEBI" id="CHEBI:60392"/>
        <dbReference type="ChEBI" id="CHEBI:61386"/>
        <dbReference type="ChEBI" id="CHEBI:61387"/>
        <dbReference type="EC" id="2.7.8.13"/>
    </reaction>
</comment>
<comment type="cofactor">
    <cofactor evidence="1">
        <name>Mg(2+)</name>
        <dbReference type="ChEBI" id="CHEBI:18420"/>
    </cofactor>
</comment>
<comment type="pathway">
    <text evidence="1">Cell wall biogenesis; peptidoglycan biosynthesis.</text>
</comment>
<comment type="subcellular location">
    <subcellularLocation>
        <location evidence="1">Cell inner membrane</location>
        <topology evidence="1">Multi-pass membrane protein</topology>
    </subcellularLocation>
</comment>
<comment type="similarity">
    <text evidence="1">Belongs to the glycosyltransferase 4 family. MraY subfamily.</text>
</comment>
<dbReference type="EC" id="2.7.8.13" evidence="1"/>
<dbReference type="EMBL" id="CP000489">
    <property type="protein sequence ID" value="ABL68700.1"/>
    <property type="molecule type" value="Genomic_DNA"/>
</dbReference>
<dbReference type="RefSeq" id="WP_011746933.1">
    <property type="nucleotide sequence ID" value="NC_008686.1"/>
</dbReference>
<dbReference type="SMR" id="A1AZK6"/>
<dbReference type="STRING" id="318586.Pden_0588"/>
<dbReference type="EnsemblBacteria" id="ABL68700">
    <property type="protein sequence ID" value="ABL68700"/>
    <property type="gene ID" value="Pden_0588"/>
</dbReference>
<dbReference type="GeneID" id="93451813"/>
<dbReference type="KEGG" id="pde:Pden_0588"/>
<dbReference type="eggNOG" id="COG0472">
    <property type="taxonomic scope" value="Bacteria"/>
</dbReference>
<dbReference type="HOGENOM" id="CLU_023982_0_0_5"/>
<dbReference type="OrthoDB" id="9805475at2"/>
<dbReference type="UniPathway" id="UPA00219"/>
<dbReference type="Proteomes" id="UP000000361">
    <property type="component" value="Chromosome 1"/>
</dbReference>
<dbReference type="GO" id="GO:0005886">
    <property type="term" value="C:plasma membrane"/>
    <property type="evidence" value="ECO:0007669"/>
    <property type="project" value="UniProtKB-SubCell"/>
</dbReference>
<dbReference type="GO" id="GO:0046872">
    <property type="term" value="F:metal ion binding"/>
    <property type="evidence" value="ECO:0007669"/>
    <property type="project" value="UniProtKB-KW"/>
</dbReference>
<dbReference type="GO" id="GO:0008963">
    <property type="term" value="F:phospho-N-acetylmuramoyl-pentapeptide-transferase activity"/>
    <property type="evidence" value="ECO:0007669"/>
    <property type="project" value="UniProtKB-UniRule"/>
</dbReference>
<dbReference type="GO" id="GO:0051992">
    <property type="term" value="F:UDP-N-acetylmuramoyl-L-alanyl-D-glutamyl-meso-2,6-diaminopimelyl-D-alanyl-D-alanine:undecaprenyl-phosphate transferase activity"/>
    <property type="evidence" value="ECO:0007669"/>
    <property type="project" value="RHEA"/>
</dbReference>
<dbReference type="GO" id="GO:0051301">
    <property type="term" value="P:cell division"/>
    <property type="evidence" value="ECO:0007669"/>
    <property type="project" value="UniProtKB-KW"/>
</dbReference>
<dbReference type="GO" id="GO:0071555">
    <property type="term" value="P:cell wall organization"/>
    <property type="evidence" value="ECO:0007669"/>
    <property type="project" value="UniProtKB-KW"/>
</dbReference>
<dbReference type="GO" id="GO:0009252">
    <property type="term" value="P:peptidoglycan biosynthetic process"/>
    <property type="evidence" value="ECO:0007669"/>
    <property type="project" value="UniProtKB-UniRule"/>
</dbReference>
<dbReference type="GO" id="GO:0008360">
    <property type="term" value="P:regulation of cell shape"/>
    <property type="evidence" value="ECO:0007669"/>
    <property type="project" value="UniProtKB-KW"/>
</dbReference>
<dbReference type="CDD" id="cd06852">
    <property type="entry name" value="GT_MraY"/>
    <property type="match status" value="1"/>
</dbReference>
<dbReference type="HAMAP" id="MF_00038">
    <property type="entry name" value="MraY"/>
    <property type="match status" value="1"/>
</dbReference>
<dbReference type="InterPro" id="IPR000715">
    <property type="entry name" value="Glycosyl_transferase_4"/>
</dbReference>
<dbReference type="InterPro" id="IPR003524">
    <property type="entry name" value="PNAcMuramoyl-5peptid_Trfase"/>
</dbReference>
<dbReference type="InterPro" id="IPR018480">
    <property type="entry name" value="PNAcMuramoyl-5peptid_Trfase_CS"/>
</dbReference>
<dbReference type="NCBIfam" id="TIGR00445">
    <property type="entry name" value="mraY"/>
    <property type="match status" value="1"/>
</dbReference>
<dbReference type="PANTHER" id="PTHR22926">
    <property type="entry name" value="PHOSPHO-N-ACETYLMURAMOYL-PENTAPEPTIDE-TRANSFERASE"/>
    <property type="match status" value="1"/>
</dbReference>
<dbReference type="PANTHER" id="PTHR22926:SF5">
    <property type="entry name" value="PHOSPHO-N-ACETYLMURAMOYL-PENTAPEPTIDE-TRANSFERASE HOMOLOG"/>
    <property type="match status" value="1"/>
</dbReference>
<dbReference type="Pfam" id="PF00953">
    <property type="entry name" value="Glycos_transf_4"/>
    <property type="match status" value="1"/>
</dbReference>
<dbReference type="Pfam" id="PF10555">
    <property type="entry name" value="MraY_sig1"/>
    <property type="match status" value="1"/>
</dbReference>
<dbReference type="PROSITE" id="PS01347">
    <property type="entry name" value="MRAY_1"/>
    <property type="match status" value="1"/>
</dbReference>
<dbReference type="PROSITE" id="PS01348">
    <property type="entry name" value="MRAY_2"/>
    <property type="match status" value="1"/>
</dbReference>
<reference key="1">
    <citation type="submission" date="2006-12" db="EMBL/GenBank/DDBJ databases">
        <title>Complete sequence of chromosome 1 of Paracoccus denitrificans PD1222.</title>
        <authorList>
            <person name="Copeland A."/>
            <person name="Lucas S."/>
            <person name="Lapidus A."/>
            <person name="Barry K."/>
            <person name="Detter J.C."/>
            <person name="Glavina del Rio T."/>
            <person name="Hammon N."/>
            <person name="Israni S."/>
            <person name="Dalin E."/>
            <person name="Tice H."/>
            <person name="Pitluck S."/>
            <person name="Munk A.C."/>
            <person name="Brettin T."/>
            <person name="Bruce D."/>
            <person name="Han C."/>
            <person name="Tapia R."/>
            <person name="Gilna P."/>
            <person name="Schmutz J."/>
            <person name="Larimer F."/>
            <person name="Land M."/>
            <person name="Hauser L."/>
            <person name="Kyrpides N."/>
            <person name="Lykidis A."/>
            <person name="Spiro S."/>
            <person name="Richardson D.J."/>
            <person name="Moir J.W.B."/>
            <person name="Ferguson S.J."/>
            <person name="van Spanning R.J.M."/>
            <person name="Richardson P."/>
        </authorList>
    </citation>
    <scope>NUCLEOTIDE SEQUENCE [LARGE SCALE GENOMIC DNA]</scope>
    <source>
        <strain>Pd 1222</strain>
    </source>
</reference>
<name>MRAY_PARDP</name>
<protein>
    <recommendedName>
        <fullName evidence="1">Phospho-N-acetylmuramoyl-pentapeptide-transferase</fullName>
        <ecNumber evidence="1">2.7.8.13</ecNumber>
    </recommendedName>
    <alternativeName>
        <fullName evidence="1">UDP-MurNAc-pentapeptide phosphotransferase</fullName>
    </alternativeName>
</protein>
<sequence length="360" mass="38383">MLYWLTNLSDGGDFFNLFRYITFRAGGAFFTALLFGFFFGRPLIDLLRRKQKKGQPIRDDGPENHFSKAGTPTMGGLLILAALTIGTLLWARLDNGYVWIVLLVTLGFAAIGFADDYAKVTKQHHAGLSGKVRLLIGLCIAAAAGAAAAWLHPAALSGELALPFFKDALINLGLLYVPFTVLVILGAANAVNLTDGLDGLAIMPVMIAAASFSVIAYMVGNANFANYLGVHFVPGTGELAVFVAALIGGGLGFLWYNAPPAAVFMGDTGSLALGGALGAIAVVTKHEIVLAIVGGLFVVEALSVIIQVLYFKRTGKRVFLMAPIHHHFEKKGWGEAQIVIRFWIIALILALIGLATLKLR</sequence>
<accession>A1AZK6</accession>
<proteinExistence type="inferred from homology"/>
<organism>
    <name type="scientific">Paracoccus denitrificans (strain Pd 1222)</name>
    <dbReference type="NCBI Taxonomy" id="318586"/>
    <lineage>
        <taxon>Bacteria</taxon>
        <taxon>Pseudomonadati</taxon>
        <taxon>Pseudomonadota</taxon>
        <taxon>Alphaproteobacteria</taxon>
        <taxon>Rhodobacterales</taxon>
        <taxon>Paracoccaceae</taxon>
        <taxon>Paracoccus</taxon>
    </lineage>
</organism>